<accession>B6JKX6</accession>
<feature type="chain" id="PRO_1000088893" description="Ribosome-binding factor A">
    <location>
        <begin position="1"/>
        <end position="111"/>
    </location>
</feature>
<dbReference type="EMBL" id="CP001217">
    <property type="protein sequence ID" value="ACJ07554.1"/>
    <property type="molecule type" value="Genomic_DNA"/>
</dbReference>
<dbReference type="SMR" id="B6JKX6"/>
<dbReference type="KEGG" id="hpp:HPP12_0397"/>
<dbReference type="HOGENOM" id="CLU_089475_6_5_7"/>
<dbReference type="Proteomes" id="UP000008198">
    <property type="component" value="Chromosome"/>
</dbReference>
<dbReference type="GO" id="GO:0005737">
    <property type="term" value="C:cytoplasm"/>
    <property type="evidence" value="ECO:0007669"/>
    <property type="project" value="UniProtKB-SubCell"/>
</dbReference>
<dbReference type="GO" id="GO:0030490">
    <property type="term" value="P:maturation of SSU-rRNA"/>
    <property type="evidence" value="ECO:0007669"/>
    <property type="project" value="UniProtKB-UniRule"/>
</dbReference>
<dbReference type="Gene3D" id="3.30.300.20">
    <property type="match status" value="1"/>
</dbReference>
<dbReference type="HAMAP" id="MF_00003">
    <property type="entry name" value="RbfA"/>
    <property type="match status" value="1"/>
</dbReference>
<dbReference type="InterPro" id="IPR015946">
    <property type="entry name" value="KH_dom-like_a/b"/>
</dbReference>
<dbReference type="InterPro" id="IPR000238">
    <property type="entry name" value="RbfA"/>
</dbReference>
<dbReference type="InterPro" id="IPR023799">
    <property type="entry name" value="RbfA_dom_sf"/>
</dbReference>
<dbReference type="InterPro" id="IPR020053">
    <property type="entry name" value="Ribosome-bd_factorA_CS"/>
</dbReference>
<dbReference type="NCBIfam" id="TIGR00082">
    <property type="entry name" value="rbfA"/>
    <property type="match status" value="1"/>
</dbReference>
<dbReference type="Pfam" id="PF02033">
    <property type="entry name" value="RBFA"/>
    <property type="match status" value="1"/>
</dbReference>
<dbReference type="SUPFAM" id="SSF89919">
    <property type="entry name" value="Ribosome-binding factor A, RbfA"/>
    <property type="match status" value="1"/>
</dbReference>
<dbReference type="PROSITE" id="PS01319">
    <property type="entry name" value="RBFA"/>
    <property type="match status" value="1"/>
</dbReference>
<gene>
    <name evidence="1" type="primary">rbfA</name>
    <name type="ordered locus">HPP12_0397</name>
</gene>
<sequence>MNAHKERLESNLLELLQEALAGLNDGELNSLSVTKVECSKGKHHALVFVLSSDHKILSKLKKAEGLIRQFVLQASGWFKCPKLSFVLDNSLEKQLRLDAIFNEIAKGKDND</sequence>
<evidence type="ECO:0000255" key="1">
    <source>
        <dbReference type="HAMAP-Rule" id="MF_00003"/>
    </source>
</evidence>
<keyword id="KW-0963">Cytoplasm</keyword>
<keyword id="KW-0690">Ribosome biogenesis</keyword>
<name>RBFA_HELP2</name>
<reference key="1">
    <citation type="submission" date="2008-10" db="EMBL/GenBank/DDBJ databases">
        <title>The complete genome sequence of Helicobacter pylori strain P12.</title>
        <authorList>
            <person name="Fischer W."/>
            <person name="Windhager L."/>
            <person name="Karnholz A."/>
            <person name="Zeiller M."/>
            <person name="Zimmer R."/>
            <person name="Haas R."/>
        </authorList>
    </citation>
    <scope>NUCLEOTIDE SEQUENCE [LARGE SCALE GENOMIC DNA]</scope>
    <source>
        <strain>P12</strain>
    </source>
</reference>
<proteinExistence type="inferred from homology"/>
<comment type="function">
    <text evidence="1">One of several proteins that assist in the late maturation steps of the functional core of the 30S ribosomal subunit. Associates with free 30S ribosomal subunits (but not with 30S subunits that are part of 70S ribosomes or polysomes). Required for efficient processing of 16S rRNA. May interact with the 5'-terminal helix region of 16S rRNA.</text>
</comment>
<comment type="subunit">
    <text evidence="1">Monomer. Binds 30S ribosomal subunits, but not 50S ribosomal subunits or 70S ribosomes.</text>
</comment>
<comment type="subcellular location">
    <subcellularLocation>
        <location evidence="1">Cytoplasm</location>
    </subcellularLocation>
</comment>
<comment type="similarity">
    <text evidence="1">Belongs to the RbfA family.</text>
</comment>
<organism>
    <name type="scientific">Helicobacter pylori (strain P12)</name>
    <dbReference type="NCBI Taxonomy" id="570508"/>
    <lineage>
        <taxon>Bacteria</taxon>
        <taxon>Pseudomonadati</taxon>
        <taxon>Campylobacterota</taxon>
        <taxon>Epsilonproteobacteria</taxon>
        <taxon>Campylobacterales</taxon>
        <taxon>Helicobacteraceae</taxon>
        <taxon>Helicobacter</taxon>
    </lineage>
</organism>
<protein>
    <recommendedName>
        <fullName evidence="1">Ribosome-binding factor A</fullName>
    </recommendedName>
</protein>